<name>CU70_LOCMI</name>
<proteinExistence type="evidence at protein level"/>
<accession>P80232</accession>
<feature type="chain" id="PRO_0000196112" description="Cuticle protein 70, isoforms A and B">
    <location>
        <begin position="1"/>
        <end position="88"/>
    </location>
</feature>
<feature type="repeat" description="1">
    <location>
        <begin position="7"/>
        <end position="10"/>
    </location>
</feature>
<feature type="repeat" description="2">
    <location>
        <begin position="48"/>
        <end position="51"/>
    </location>
</feature>
<feature type="repeat" description="3">
    <location>
        <begin position="55"/>
        <end position="58"/>
    </location>
</feature>
<feature type="repeat" description="4">
    <location>
        <begin position="60"/>
        <end position="63"/>
    </location>
</feature>
<feature type="repeat" description="5">
    <location>
        <begin position="66"/>
        <end position="69"/>
    </location>
</feature>
<feature type="sequence variant" description="In isoform LM-70B.">
    <original>F</original>
    <variation>Y</variation>
    <location>
        <position position="82"/>
    </location>
</feature>
<dbReference type="PIR" id="S38267">
    <property type="entry name" value="S38267"/>
</dbReference>
<dbReference type="GO" id="GO:0042302">
    <property type="term" value="F:structural constituent of cuticle"/>
    <property type="evidence" value="ECO:0007669"/>
    <property type="project" value="UniProtKB-KW"/>
</dbReference>
<keyword id="KW-0193">Cuticle</keyword>
<keyword id="KW-0903">Direct protein sequencing</keyword>
<keyword id="KW-0677">Repeat</keyword>
<protein>
    <recommendedName>
        <fullName>Cuticle protein 70, isoforms A and B</fullName>
    </recommendedName>
    <alternativeName>
        <fullName>LM-70A/LM-70B</fullName>
    </alternativeName>
</protein>
<reference key="1">
    <citation type="journal article" date="1993" name="Eur. J. Biochem.">
        <title>Combined plasma-desorption mass spectrometry and Edman degradation applied to simultaneous sequence determination of isoforms of structural proteins from the cuticle of Locusta migratoria.</title>
        <authorList>
            <person name="Andreasen L."/>
            <person name="Hoejrup P."/>
            <person name="Andersen S.O."/>
            <person name="Roepstorff P."/>
        </authorList>
    </citation>
    <scope>PROTEIN SEQUENCE</scope>
</reference>
<comment type="function">
    <text>Component of the cuticle of migratory locust which contains more than 100 different structural proteins.</text>
</comment>
<comment type="domain">
    <text>The tetrapeptide (A-A-P-[AV]) repeats found throughout the protein are also present in many proteins constituting the protective envelope of other species.</text>
</comment>
<comment type="miscellaneous">
    <text>The sequence shown here is that of isoform LM-70A.</text>
</comment>
<organism>
    <name type="scientific">Locusta migratoria</name>
    <name type="common">Migratory locust</name>
    <dbReference type="NCBI Taxonomy" id="7004"/>
    <lineage>
        <taxon>Eukaryota</taxon>
        <taxon>Metazoa</taxon>
        <taxon>Ecdysozoa</taxon>
        <taxon>Arthropoda</taxon>
        <taxon>Hexapoda</taxon>
        <taxon>Insecta</taxon>
        <taxon>Pterygota</taxon>
        <taxon>Neoptera</taxon>
        <taxon>Polyneoptera</taxon>
        <taxon>Orthoptera</taxon>
        <taxon>Caelifera</taxon>
        <taxon>Acrididea</taxon>
        <taxon>Acridomorpha</taxon>
        <taxon>Acridoidea</taxon>
        <taxon>Acrididae</taxon>
        <taxon>Oedipodinae</taxon>
        <taxon>Locusta</taxon>
    </lineage>
</organism>
<sequence>GYLGGYAAPAVAVAPAPALAVAHAPAVVVATSYARISQVTNSVPIAVAAPAVPKAAVPVAAPVVAAAPVIAAHAPLALGHGFGYGGYH</sequence>